<proteinExistence type="inferred from homology"/>
<protein>
    <recommendedName>
        <fullName evidence="1">Geranylgeranylglyceryl phosphate synthase</fullName>
        <shortName evidence="1">GGGP synthase</shortName>
        <shortName evidence="1">GGGPS</shortName>
        <ecNumber evidence="1">2.5.1.41</ecNumber>
    </recommendedName>
    <alternativeName>
        <fullName evidence="1">(S)-3-O-geranylgeranylglyceryl phosphate synthase</fullName>
    </alternativeName>
    <alternativeName>
        <fullName evidence="1">Phosphoglycerol geranylgeranyltransferase</fullName>
    </alternativeName>
</protein>
<comment type="function">
    <text evidence="1">Prenyltransferase that catalyzes the transfer of the geranylgeranyl moiety of geranylgeranyl diphosphate (GGPP) to the C3 hydroxyl of sn-glycerol-1-phosphate (G1P). This reaction is the first ether-bond-formation step in the biosynthesis of archaeal membrane lipids.</text>
</comment>
<comment type="catalytic activity">
    <reaction evidence="1">
        <text>sn-glycerol 1-phosphate + (2E,6E,10E)-geranylgeranyl diphosphate = sn-3-O-(geranylgeranyl)glycerol 1-phosphate + diphosphate</text>
        <dbReference type="Rhea" id="RHEA:23404"/>
        <dbReference type="ChEBI" id="CHEBI:33019"/>
        <dbReference type="ChEBI" id="CHEBI:57677"/>
        <dbReference type="ChEBI" id="CHEBI:57685"/>
        <dbReference type="ChEBI" id="CHEBI:58756"/>
        <dbReference type="EC" id="2.5.1.41"/>
    </reaction>
</comment>
<comment type="cofactor">
    <cofactor evidence="1">
        <name>Mg(2+)</name>
        <dbReference type="ChEBI" id="CHEBI:18420"/>
    </cofactor>
</comment>
<comment type="pathway">
    <text evidence="1">Membrane lipid metabolism; glycerophospholipid metabolism.</text>
</comment>
<comment type="subcellular location">
    <subcellularLocation>
        <location evidence="1">Cytoplasm</location>
    </subcellularLocation>
</comment>
<comment type="similarity">
    <text evidence="1">Belongs to the GGGP/HepGP synthase family. Group I subfamily.</text>
</comment>
<evidence type="ECO:0000255" key="1">
    <source>
        <dbReference type="HAMAP-Rule" id="MF_00112"/>
    </source>
</evidence>
<feature type="chain" id="PRO_0000304183" description="Geranylgeranylglyceryl phosphate synthase">
    <location>
        <begin position="1"/>
        <end position="239"/>
    </location>
</feature>
<feature type="binding site" evidence="1">
    <location>
        <position position="13"/>
    </location>
    <ligand>
        <name>sn-glycerol 1-phosphate</name>
        <dbReference type="ChEBI" id="CHEBI:57685"/>
    </ligand>
</feature>
<feature type="binding site" evidence="1">
    <location>
        <position position="15"/>
    </location>
    <ligand>
        <name>Mg(2+)</name>
        <dbReference type="ChEBI" id="CHEBI:18420"/>
    </ligand>
</feature>
<feature type="binding site" evidence="1">
    <location>
        <position position="42"/>
    </location>
    <ligand>
        <name>Mg(2+)</name>
        <dbReference type="ChEBI" id="CHEBI:18420"/>
    </ligand>
</feature>
<feature type="binding site" evidence="1">
    <location>
        <begin position="162"/>
        <end position="167"/>
    </location>
    <ligand>
        <name>sn-glycerol 1-phosphate</name>
        <dbReference type="ChEBI" id="CHEBI:57685"/>
    </ligand>
</feature>
<feature type="binding site" evidence="1">
    <location>
        <position position="192"/>
    </location>
    <ligand>
        <name>sn-glycerol 1-phosphate</name>
        <dbReference type="ChEBI" id="CHEBI:57685"/>
    </ligand>
</feature>
<feature type="binding site" evidence="1">
    <location>
        <begin position="212"/>
        <end position="213"/>
    </location>
    <ligand>
        <name>sn-glycerol 1-phosphate</name>
        <dbReference type="ChEBI" id="CHEBI:57685"/>
    </ligand>
</feature>
<dbReference type="EC" id="2.5.1.41" evidence="1"/>
<dbReference type="EMBL" id="AM180088">
    <property type="protein sequence ID" value="CAJ51398.1"/>
    <property type="molecule type" value="Genomic_DNA"/>
</dbReference>
<dbReference type="RefSeq" id="WP_011570559.1">
    <property type="nucleotide sequence ID" value="NC_008212.1"/>
</dbReference>
<dbReference type="SMR" id="Q18KP6"/>
<dbReference type="STRING" id="362976.HQ_1269A"/>
<dbReference type="GeneID" id="4194412"/>
<dbReference type="KEGG" id="hwa:HQ_1269A"/>
<dbReference type="eggNOG" id="arCOG01085">
    <property type="taxonomic scope" value="Archaea"/>
</dbReference>
<dbReference type="HOGENOM" id="CLU_095211_0_0_2"/>
<dbReference type="UniPathway" id="UPA00940"/>
<dbReference type="Proteomes" id="UP000001975">
    <property type="component" value="Chromosome"/>
</dbReference>
<dbReference type="GO" id="GO:0005737">
    <property type="term" value="C:cytoplasm"/>
    <property type="evidence" value="ECO:0007669"/>
    <property type="project" value="UniProtKB-SubCell"/>
</dbReference>
<dbReference type="GO" id="GO:0000287">
    <property type="term" value="F:magnesium ion binding"/>
    <property type="evidence" value="ECO:0007669"/>
    <property type="project" value="UniProtKB-UniRule"/>
</dbReference>
<dbReference type="GO" id="GO:0047294">
    <property type="term" value="F:phosphoglycerol geranylgeranyltransferase activity"/>
    <property type="evidence" value="ECO:0007669"/>
    <property type="project" value="UniProtKB-UniRule"/>
</dbReference>
<dbReference type="GO" id="GO:0046474">
    <property type="term" value="P:glycerophospholipid biosynthetic process"/>
    <property type="evidence" value="ECO:0007669"/>
    <property type="project" value="UniProtKB-UniRule"/>
</dbReference>
<dbReference type="CDD" id="cd02812">
    <property type="entry name" value="PcrB_like"/>
    <property type="match status" value="1"/>
</dbReference>
<dbReference type="Gene3D" id="3.20.20.390">
    <property type="entry name" value="FMN-linked oxidoreductases"/>
    <property type="match status" value="1"/>
</dbReference>
<dbReference type="HAMAP" id="MF_00112">
    <property type="entry name" value="GGGP_HepGP_synthase"/>
    <property type="match status" value="1"/>
</dbReference>
<dbReference type="InterPro" id="IPR039074">
    <property type="entry name" value="GGGP/HepGP_synthase_I"/>
</dbReference>
<dbReference type="InterPro" id="IPR038597">
    <property type="entry name" value="GGGP/HepGP_synthase_sf"/>
</dbReference>
<dbReference type="InterPro" id="IPR008205">
    <property type="entry name" value="GGGP_HepGP_synthase"/>
</dbReference>
<dbReference type="InterPro" id="IPR026417">
    <property type="entry name" value="GGGPS_halobacteria"/>
</dbReference>
<dbReference type="NCBIfam" id="TIGR01768">
    <property type="entry name" value="GGGP-family"/>
    <property type="match status" value="1"/>
</dbReference>
<dbReference type="NCBIfam" id="TIGR04147">
    <property type="entry name" value="GGGPS_Halobact"/>
    <property type="match status" value="1"/>
</dbReference>
<dbReference type="NCBIfam" id="NF003199">
    <property type="entry name" value="PRK04169.1-3"/>
    <property type="match status" value="1"/>
</dbReference>
<dbReference type="PANTHER" id="PTHR40029">
    <property type="match status" value="1"/>
</dbReference>
<dbReference type="PANTHER" id="PTHR40029:SF2">
    <property type="entry name" value="HEPTAPRENYLGLYCERYL PHOSPHATE SYNTHASE"/>
    <property type="match status" value="1"/>
</dbReference>
<dbReference type="Pfam" id="PF01884">
    <property type="entry name" value="PcrB"/>
    <property type="match status" value="1"/>
</dbReference>
<dbReference type="SUPFAM" id="SSF51395">
    <property type="entry name" value="FMN-linked oxidoreductases"/>
    <property type="match status" value="1"/>
</dbReference>
<gene>
    <name type="ordered locus">HQ_1269A</name>
</gene>
<sequence>MNGPWTEWDHVLKVDPDKPLVDGETFEDVCQTGTDAIEIGGTLDITTEKMQEVVDACSRYDMPLYQEPSNPAVVVESDALDGYLVPTVFNAESAFWVAGAHKEWVRIDGPLDWERTATEAYIVLNPDASVAEVTEANTDQTAEDVAAFATVAERLFGQEIIYIEYSGTFGDTKKVAAAAAALTESTLFYGGGIGGYDSAYEMGAHADTIVVGDLLHDEGVDAVSETVAGVKDAHADGEI</sequence>
<organism>
    <name type="scientific">Haloquadratum walsbyi (strain DSM 16790 / HBSQ001)</name>
    <dbReference type="NCBI Taxonomy" id="362976"/>
    <lineage>
        <taxon>Archaea</taxon>
        <taxon>Methanobacteriati</taxon>
        <taxon>Methanobacteriota</taxon>
        <taxon>Stenosarchaea group</taxon>
        <taxon>Halobacteria</taxon>
        <taxon>Halobacteriales</taxon>
        <taxon>Haloferacaceae</taxon>
        <taxon>Haloquadratum</taxon>
    </lineage>
</organism>
<accession>Q18KP6</accession>
<name>GGGPS_HALWD</name>
<reference key="1">
    <citation type="journal article" date="2006" name="BMC Genomics">
        <title>The genome of the square archaeon Haloquadratum walsbyi: life at the limits of water activity.</title>
        <authorList>
            <person name="Bolhuis H."/>
            <person name="Palm P."/>
            <person name="Wende A."/>
            <person name="Falb M."/>
            <person name="Rampp M."/>
            <person name="Rodriguez-Valera F."/>
            <person name="Pfeiffer F."/>
            <person name="Oesterhelt D."/>
        </authorList>
    </citation>
    <scope>NUCLEOTIDE SEQUENCE [LARGE SCALE GENOMIC DNA]</scope>
    <source>
        <strain>DSM 16790 / HBSQ001</strain>
    </source>
</reference>
<keyword id="KW-0963">Cytoplasm</keyword>
<keyword id="KW-0444">Lipid biosynthesis</keyword>
<keyword id="KW-0443">Lipid metabolism</keyword>
<keyword id="KW-0460">Magnesium</keyword>
<keyword id="KW-0479">Metal-binding</keyword>
<keyword id="KW-0594">Phospholipid biosynthesis</keyword>
<keyword id="KW-1208">Phospholipid metabolism</keyword>
<keyword id="KW-1185">Reference proteome</keyword>
<keyword id="KW-0808">Transferase</keyword>